<feature type="chain" id="PRO_0000257527" description="Putative pre-16S rRNA nuclease">
    <location>
        <begin position="1"/>
        <end position="133"/>
    </location>
</feature>
<organism>
    <name type="scientific">Dehalococcoides mccartyi (strain ATCC BAA-2266 / KCTC 15142 / 195)</name>
    <name type="common">Dehalococcoides ethenogenes (strain 195)</name>
    <dbReference type="NCBI Taxonomy" id="243164"/>
    <lineage>
        <taxon>Bacteria</taxon>
        <taxon>Bacillati</taxon>
        <taxon>Chloroflexota</taxon>
        <taxon>Dehalococcoidia</taxon>
        <taxon>Dehalococcoidales</taxon>
        <taxon>Dehalococcoidaceae</taxon>
        <taxon>Dehalococcoides</taxon>
    </lineage>
</organism>
<protein>
    <recommendedName>
        <fullName evidence="1">Putative pre-16S rRNA nuclease</fullName>
        <ecNumber evidence="1">3.1.-.-</ecNumber>
    </recommendedName>
</protein>
<name>YQGF_DEHM1</name>
<gene>
    <name type="ordered locus">DET0051</name>
</gene>
<comment type="function">
    <text evidence="1">Could be a nuclease involved in processing of the 5'-end of pre-16S rRNA.</text>
</comment>
<comment type="subcellular location">
    <subcellularLocation>
        <location evidence="1">Cytoplasm</location>
    </subcellularLocation>
</comment>
<comment type="similarity">
    <text evidence="1">Belongs to the YqgF nuclease family.</text>
</comment>
<keyword id="KW-0963">Cytoplasm</keyword>
<keyword id="KW-0378">Hydrolase</keyword>
<keyword id="KW-0540">Nuclease</keyword>
<keyword id="KW-0690">Ribosome biogenesis</keyword>
<accession>Q3ZAE3</accession>
<evidence type="ECO:0000255" key="1">
    <source>
        <dbReference type="HAMAP-Rule" id="MF_00651"/>
    </source>
</evidence>
<proteinExistence type="inferred from homology"/>
<dbReference type="EC" id="3.1.-.-" evidence="1"/>
<dbReference type="EMBL" id="CP000027">
    <property type="protein sequence ID" value="AAW39087.1"/>
    <property type="molecule type" value="Genomic_DNA"/>
</dbReference>
<dbReference type="SMR" id="Q3ZAE3"/>
<dbReference type="FunCoup" id="Q3ZAE3">
    <property type="interactions" value="220"/>
</dbReference>
<dbReference type="STRING" id="243164.DET0051"/>
<dbReference type="KEGG" id="det:DET0051"/>
<dbReference type="PATRIC" id="fig|243164.10.peg.50"/>
<dbReference type="eggNOG" id="COG0816">
    <property type="taxonomic scope" value="Bacteria"/>
</dbReference>
<dbReference type="HOGENOM" id="CLU_098240_2_0_0"/>
<dbReference type="InParanoid" id="Q3ZAE3"/>
<dbReference type="Proteomes" id="UP000008289">
    <property type="component" value="Chromosome"/>
</dbReference>
<dbReference type="GO" id="GO:0005829">
    <property type="term" value="C:cytosol"/>
    <property type="evidence" value="ECO:0007669"/>
    <property type="project" value="TreeGrafter"/>
</dbReference>
<dbReference type="GO" id="GO:0004518">
    <property type="term" value="F:nuclease activity"/>
    <property type="evidence" value="ECO:0007669"/>
    <property type="project" value="UniProtKB-KW"/>
</dbReference>
<dbReference type="GO" id="GO:0000967">
    <property type="term" value="P:rRNA 5'-end processing"/>
    <property type="evidence" value="ECO:0007669"/>
    <property type="project" value="UniProtKB-UniRule"/>
</dbReference>
<dbReference type="CDD" id="cd16964">
    <property type="entry name" value="YqgF"/>
    <property type="match status" value="1"/>
</dbReference>
<dbReference type="Gene3D" id="3.30.420.140">
    <property type="entry name" value="YqgF/RNase H-like domain"/>
    <property type="match status" value="1"/>
</dbReference>
<dbReference type="HAMAP" id="MF_00651">
    <property type="entry name" value="Nuclease_YqgF"/>
    <property type="match status" value="1"/>
</dbReference>
<dbReference type="InterPro" id="IPR012337">
    <property type="entry name" value="RNaseH-like_sf"/>
</dbReference>
<dbReference type="InterPro" id="IPR005227">
    <property type="entry name" value="YqgF"/>
</dbReference>
<dbReference type="InterPro" id="IPR006641">
    <property type="entry name" value="YqgF/RNaseH-like_dom"/>
</dbReference>
<dbReference type="InterPro" id="IPR037027">
    <property type="entry name" value="YqgF/RNaseH-like_dom_sf"/>
</dbReference>
<dbReference type="NCBIfam" id="TIGR00250">
    <property type="entry name" value="RNAse_H_YqgF"/>
    <property type="match status" value="1"/>
</dbReference>
<dbReference type="PANTHER" id="PTHR33317">
    <property type="entry name" value="POLYNUCLEOTIDYL TRANSFERASE, RIBONUCLEASE H-LIKE SUPERFAMILY PROTEIN"/>
    <property type="match status" value="1"/>
</dbReference>
<dbReference type="PANTHER" id="PTHR33317:SF4">
    <property type="entry name" value="POLYNUCLEOTIDYL TRANSFERASE, RIBONUCLEASE H-LIKE SUPERFAMILY PROTEIN"/>
    <property type="match status" value="1"/>
</dbReference>
<dbReference type="Pfam" id="PF03652">
    <property type="entry name" value="RuvX"/>
    <property type="match status" value="1"/>
</dbReference>
<dbReference type="SMART" id="SM00732">
    <property type="entry name" value="YqgFc"/>
    <property type="match status" value="1"/>
</dbReference>
<dbReference type="SUPFAM" id="SSF53098">
    <property type="entry name" value="Ribonuclease H-like"/>
    <property type="match status" value="1"/>
</dbReference>
<sequence>MGDKWIGVALSDPLRILASPLVILRRDDDAKTVENIEALVKTHQPDLLVIGLPVSLNGTIGPQAEKVKAFSGLLSQSLNTEIIFRDERFSTDEARRKMNDSGKNNKTVRDDAAAAAVILQDYLDETNPPCFQP</sequence>
<reference key="1">
    <citation type="journal article" date="2005" name="Science">
        <title>Genome sequence of the PCE-dechlorinating bacterium Dehalococcoides ethenogenes.</title>
        <authorList>
            <person name="Seshadri R."/>
            <person name="Adrian L."/>
            <person name="Fouts D.E."/>
            <person name="Eisen J.A."/>
            <person name="Phillippy A.M."/>
            <person name="Methe B.A."/>
            <person name="Ward N.L."/>
            <person name="Nelson W.C."/>
            <person name="DeBoy R.T."/>
            <person name="Khouri H.M."/>
            <person name="Kolonay J.F."/>
            <person name="Dodson R.J."/>
            <person name="Daugherty S.C."/>
            <person name="Brinkac L.M."/>
            <person name="Sullivan S.A."/>
            <person name="Madupu R."/>
            <person name="Nelson K.E."/>
            <person name="Kang K.H."/>
            <person name="Impraim M."/>
            <person name="Tran K."/>
            <person name="Robinson J.M."/>
            <person name="Forberger H.A."/>
            <person name="Fraser C.M."/>
            <person name="Zinder S.H."/>
            <person name="Heidelberg J.F."/>
        </authorList>
    </citation>
    <scope>NUCLEOTIDE SEQUENCE [LARGE SCALE GENOMIC DNA]</scope>
    <source>
        <strain>ATCC BAA-2266 / KCTC 15142 / 195</strain>
    </source>
</reference>